<sequence length="465" mass="50394">MDKSQGVLLSSNVGAGSRPWPELLGSAHWDGLLDPLDLTLRRLILLCGDLCQVTYDSFNSDSHSRYCGSCRFSRATLLDRTQFPAAGDLSVAAYLYATSDATAFPGSMVYSMSREAWSKESNWIGYVAVSNDAAAAASGQRVIYVAWRGTIRSLEWVDVLKPDLVDHDDILPEGHPGRGRSRVMKGWYLIYSSTDERSPFSKYSARDQMLAAVRELVARYRNESLSVVCTGHSLGASLATLCAFDIVVNGVSKVGDGAHIPVTAVVFGSPQIGNPEFKKQFEEQPNLRALHVRNTPDLIPLYPSGLLGYANVGKTLQVDSKKSPYVKRDTSPGDYHNLQGILHTVAGWDGKDGEFKLQVKRSVALVNKSSGFLKDSNLVPESWWVERNKGMVLGQNGEWQLEGPAEENLPVPPVVTGKIIDDDVAAVATSSSAKEGKKTGKGSKLLSGLIDQLLCVPDTCKAGAA</sequence>
<dbReference type="EC" id="3.1.1.-"/>
<dbReference type="EMBL" id="CM000126">
    <property type="protein sequence ID" value="EEC71366.1"/>
    <property type="molecule type" value="Genomic_DNA"/>
</dbReference>
<dbReference type="SMR" id="B8A8C9"/>
<dbReference type="STRING" id="39946.B8A8C9"/>
<dbReference type="ESTHER" id="orysa-Q5NAI4">
    <property type="family name" value="Plant_phospholipase"/>
</dbReference>
<dbReference type="EnsemblPlants" id="BGIOSGA000932-TA">
    <property type="protein sequence ID" value="BGIOSGA000932-PA"/>
    <property type="gene ID" value="BGIOSGA000932"/>
</dbReference>
<dbReference type="EnsemblPlants" id="OsGoSa_01g0030200.01">
    <property type="protein sequence ID" value="OsGoSa_01g0030200.01"/>
    <property type="gene ID" value="OsGoSa_01g0030200"/>
</dbReference>
<dbReference type="EnsemblPlants" id="OsIR64_01g0029730.01">
    <property type="protein sequence ID" value="OsIR64_01g0029730.01"/>
    <property type="gene ID" value="OsIR64_01g0029730"/>
</dbReference>
<dbReference type="EnsemblPlants" id="OsKYG_01g0029920.01">
    <property type="protein sequence ID" value="OsKYG_01g0029920.01"/>
    <property type="gene ID" value="OsKYG_01g0029920"/>
</dbReference>
<dbReference type="EnsemblPlants" id="OsLaMu_01g0030140.01">
    <property type="protein sequence ID" value="OsLaMu_01g0030140.01"/>
    <property type="gene ID" value="OsLaMu_01g0030140"/>
</dbReference>
<dbReference type="EnsemblPlants" id="OsLima_01g0029970.01">
    <property type="protein sequence ID" value="OsLima_01g0029970.01"/>
    <property type="gene ID" value="OsLima_01g0029970"/>
</dbReference>
<dbReference type="EnsemblPlants" id="OsMH63_01G030800_01">
    <property type="protein sequence ID" value="OsMH63_01G030800_01"/>
    <property type="gene ID" value="OsMH63_01G030800"/>
</dbReference>
<dbReference type="EnsemblPlants" id="OsPr106_01g0030010.01">
    <property type="protein sequence ID" value="OsPr106_01g0030010.01"/>
    <property type="gene ID" value="OsPr106_01g0030010"/>
</dbReference>
<dbReference type="EnsemblPlants" id="OsZS97_01G030150_01">
    <property type="protein sequence ID" value="OsZS97_01G030150_01"/>
    <property type="gene ID" value="OsZS97_01G030150"/>
</dbReference>
<dbReference type="Gramene" id="BGIOSGA000932-TA">
    <property type="protein sequence ID" value="BGIOSGA000932-PA"/>
    <property type="gene ID" value="BGIOSGA000932"/>
</dbReference>
<dbReference type="Gramene" id="OsGoSa_01g0030200.01">
    <property type="protein sequence ID" value="OsGoSa_01g0030200.01"/>
    <property type="gene ID" value="OsGoSa_01g0030200"/>
</dbReference>
<dbReference type="Gramene" id="OsIR64_01g0029730.01">
    <property type="protein sequence ID" value="OsIR64_01g0029730.01"/>
    <property type="gene ID" value="OsIR64_01g0029730"/>
</dbReference>
<dbReference type="Gramene" id="OsKYG_01g0029920.01">
    <property type="protein sequence ID" value="OsKYG_01g0029920.01"/>
    <property type="gene ID" value="OsKYG_01g0029920"/>
</dbReference>
<dbReference type="Gramene" id="OsLaMu_01g0030140.01">
    <property type="protein sequence ID" value="OsLaMu_01g0030140.01"/>
    <property type="gene ID" value="OsLaMu_01g0030140"/>
</dbReference>
<dbReference type="Gramene" id="OsLima_01g0029970.01">
    <property type="protein sequence ID" value="OsLima_01g0029970.01"/>
    <property type="gene ID" value="OsLima_01g0029970"/>
</dbReference>
<dbReference type="Gramene" id="OsMH63_01G030800_01">
    <property type="protein sequence ID" value="OsMH63_01G030800_01"/>
    <property type="gene ID" value="OsMH63_01G030800"/>
</dbReference>
<dbReference type="Gramene" id="OsPr106_01g0030010.01">
    <property type="protein sequence ID" value="OsPr106_01g0030010.01"/>
    <property type="gene ID" value="OsPr106_01g0030010"/>
</dbReference>
<dbReference type="Gramene" id="OsZS97_01G030150_01">
    <property type="protein sequence ID" value="OsZS97_01G030150_01"/>
    <property type="gene ID" value="OsZS97_01G030150"/>
</dbReference>
<dbReference type="HOGENOM" id="CLU_018841_0_0_1"/>
<dbReference type="OMA" id="GSMVYSM"/>
<dbReference type="OrthoDB" id="438440at2759"/>
<dbReference type="Proteomes" id="UP000007015">
    <property type="component" value="Chromosome 1"/>
</dbReference>
<dbReference type="GO" id="GO:0005737">
    <property type="term" value="C:cytoplasm"/>
    <property type="evidence" value="ECO:0000250"/>
    <property type="project" value="UniProtKB"/>
</dbReference>
<dbReference type="GO" id="GO:0008970">
    <property type="term" value="F:phospholipase A1 activity"/>
    <property type="evidence" value="ECO:0000250"/>
    <property type="project" value="UniProtKB"/>
</dbReference>
<dbReference type="GO" id="GO:0071493">
    <property type="term" value="P:cellular response to UV-B"/>
    <property type="evidence" value="ECO:0007669"/>
    <property type="project" value="EnsemblPlants"/>
</dbReference>
<dbReference type="GO" id="GO:0016042">
    <property type="term" value="P:lipid catabolic process"/>
    <property type="evidence" value="ECO:0007669"/>
    <property type="project" value="UniProtKB-KW"/>
</dbReference>
<dbReference type="GO" id="GO:0009650">
    <property type="term" value="P:UV protection"/>
    <property type="evidence" value="ECO:0007669"/>
    <property type="project" value="EnsemblPlants"/>
</dbReference>
<dbReference type="CDD" id="cd00519">
    <property type="entry name" value="Lipase_3"/>
    <property type="match status" value="1"/>
</dbReference>
<dbReference type="FunFam" id="3.40.50.1820:FF:000065">
    <property type="entry name" value="Phospholipase A1-II 3"/>
    <property type="match status" value="1"/>
</dbReference>
<dbReference type="Gene3D" id="3.40.50.1820">
    <property type="entry name" value="alpha/beta hydrolase"/>
    <property type="match status" value="1"/>
</dbReference>
<dbReference type="InterPro" id="IPR029058">
    <property type="entry name" value="AB_hydrolase_fold"/>
</dbReference>
<dbReference type="InterPro" id="IPR002921">
    <property type="entry name" value="Fungal_lipase-type"/>
</dbReference>
<dbReference type="InterPro" id="IPR033556">
    <property type="entry name" value="PLA"/>
</dbReference>
<dbReference type="PANTHER" id="PTHR31828:SF10">
    <property type="entry name" value="PHOSPHOLIPASE A1-IIDELTA"/>
    <property type="match status" value="1"/>
</dbReference>
<dbReference type="PANTHER" id="PTHR31828">
    <property type="entry name" value="PHOSPHOLIPASE A1-IIGAMMA"/>
    <property type="match status" value="1"/>
</dbReference>
<dbReference type="Pfam" id="PF01764">
    <property type="entry name" value="Lipase_3"/>
    <property type="match status" value="1"/>
</dbReference>
<dbReference type="SUPFAM" id="SSF53474">
    <property type="entry name" value="alpha/beta-Hydrolases"/>
    <property type="match status" value="1"/>
</dbReference>
<keyword id="KW-0963">Cytoplasm</keyword>
<keyword id="KW-0378">Hydrolase</keyword>
<keyword id="KW-0442">Lipid degradation</keyword>
<keyword id="KW-0443">Lipid metabolism</keyword>
<keyword id="KW-1185">Reference proteome</keyword>
<reference key="1">
    <citation type="journal article" date="2005" name="PLoS Biol.">
        <title>The genomes of Oryza sativa: a history of duplications.</title>
        <authorList>
            <person name="Yu J."/>
            <person name="Wang J."/>
            <person name="Lin W."/>
            <person name="Li S."/>
            <person name="Li H."/>
            <person name="Zhou J."/>
            <person name="Ni P."/>
            <person name="Dong W."/>
            <person name="Hu S."/>
            <person name="Zeng C."/>
            <person name="Zhang J."/>
            <person name="Zhang Y."/>
            <person name="Li R."/>
            <person name="Xu Z."/>
            <person name="Li S."/>
            <person name="Li X."/>
            <person name="Zheng H."/>
            <person name="Cong L."/>
            <person name="Lin L."/>
            <person name="Yin J."/>
            <person name="Geng J."/>
            <person name="Li G."/>
            <person name="Shi J."/>
            <person name="Liu J."/>
            <person name="Lv H."/>
            <person name="Li J."/>
            <person name="Wang J."/>
            <person name="Deng Y."/>
            <person name="Ran L."/>
            <person name="Shi X."/>
            <person name="Wang X."/>
            <person name="Wu Q."/>
            <person name="Li C."/>
            <person name="Ren X."/>
            <person name="Wang J."/>
            <person name="Wang X."/>
            <person name="Li D."/>
            <person name="Liu D."/>
            <person name="Zhang X."/>
            <person name="Ji Z."/>
            <person name="Zhao W."/>
            <person name="Sun Y."/>
            <person name="Zhang Z."/>
            <person name="Bao J."/>
            <person name="Han Y."/>
            <person name="Dong L."/>
            <person name="Ji J."/>
            <person name="Chen P."/>
            <person name="Wu S."/>
            <person name="Liu J."/>
            <person name="Xiao Y."/>
            <person name="Bu D."/>
            <person name="Tan J."/>
            <person name="Yang L."/>
            <person name="Ye C."/>
            <person name="Zhang J."/>
            <person name="Xu J."/>
            <person name="Zhou Y."/>
            <person name="Yu Y."/>
            <person name="Zhang B."/>
            <person name="Zhuang S."/>
            <person name="Wei H."/>
            <person name="Liu B."/>
            <person name="Lei M."/>
            <person name="Yu H."/>
            <person name="Li Y."/>
            <person name="Xu H."/>
            <person name="Wei S."/>
            <person name="He X."/>
            <person name="Fang L."/>
            <person name="Zhang Z."/>
            <person name="Zhang Y."/>
            <person name="Huang X."/>
            <person name="Su Z."/>
            <person name="Tong W."/>
            <person name="Li J."/>
            <person name="Tong Z."/>
            <person name="Li S."/>
            <person name="Ye J."/>
            <person name="Wang L."/>
            <person name="Fang L."/>
            <person name="Lei T."/>
            <person name="Chen C.-S."/>
            <person name="Chen H.-C."/>
            <person name="Xu Z."/>
            <person name="Li H."/>
            <person name="Huang H."/>
            <person name="Zhang F."/>
            <person name="Xu H."/>
            <person name="Li N."/>
            <person name="Zhao C."/>
            <person name="Li S."/>
            <person name="Dong L."/>
            <person name="Huang Y."/>
            <person name="Li L."/>
            <person name="Xi Y."/>
            <person name="Qi Q."/>
            <person name="Li W."/>
            <person name="Zhang B."/>
            <person name="Hu W."/>
            <person name="Zhang Y."/>
            <person name="Tian X."/>
            <person name="Jiao Y."/>
            <person name="Liang X."/>
            <person name="Jin J."/>
            <person name="Gao L."/>
            <person name="Zheng W."/>
            <person name="Hao B."/>
            <person name="Liu S.-M."/>
            <person name="Wang W."/>
            <person name="Yuan L."/>
            <person name="Cao M."/>
            <person name="McDermott J."/>
            <person name="Samudrala R."/>
            <person name="Wang J."/>
            <person name="Wong G.K.-S."/>
            <person name="Yang H."/>
        </authorList>
    </citation>
    <scope>NUCLEOTIDE SEQUENCE [LARGE SCALE GENOMIC DNA]</scope>
    <source>
        <strain>cv. 93-11</strain>
    </source>
</reference>
<gene>
    <name type="ORF">OsI_03470</name>
</gene>
<organism>
    <name type="scientific">Oryza sativa subsp. indica</name>
    <name type="common">Rice</name>
    <dbReference type="NCBI Taxonomy" id="39946"/>
    <lineage>
        <taxon>Eukaryota</taxon>
        <taxon>Viridiplantae</taxon>
        <taxon>Streptophyta</taxon>
        <taxon>Embryophyta</taxon>
        <taxon>Tracheophyta</taxon>
        <taxon>Spermatophyta</taxon>
        <taxon>Magnoliopsida</taxon>
        <taxon>Liliopsida</taxon>
        <taxon>Poales</taxon>
        <taxon>Poaceae</taxon>
        <taxon>BOP clade</taxon>
        <taxon>Oryzoideae</taxon>
        <taxon>Oryzeae</taxon>
        <taxon>Oryzinae</taxon>
        <taxon>Oryza</taxon>
        <taxon>Oryza sativa</taxon>
    </lineage>
</organism>
<evidence type="ECO:0000250" key="1"/>
<evidence type="ECO:0000305" key="2"/>
<name>PLA5_ORYSI</name>
<protein>
    <recommendedName>
        <fullName>Phospholipase A1-II 5</fullName>
        <ecNumber>3.1.1.-</ecNumber>
    </recommendedName>
</protein>
<proteinExistence type="inferred from homology"/>
<feature type="chain" id="PRO_0000409370" description="Phospholipase A1-II 5">
    <location>
        <begin position="1"/>
        <end position="465"/>
    </location>
</feature>
<feature type="active site" description="Acyl-ester intermediate" evidence="1">
    <location>
        <position position="233"/>
    </location>
</feature>
<feature type="active site" description="Charge relay system" evidence="1">
    <location>
        <position position="233"/>
    </location>
</feature>
<feature type="active site" description="Charge relay system" evidence="1">
    <location>
        <position position="297"/>
    </location>
</feature>
<feature type="active site" description="Charge relay system" evidence="1">
    <location>
        <position position="336"/>
    </location>
</feature>
<comment type="function">
    <text evidence="1">Acylhydrolase that catalyzes the hydrolysis of phospholipids at the sn-1 position.</text>
</comment>
<comment type="subcellular location">
    <subcellularLocation>
        <location evidence="1">Cytoplasm</location>
    </subcellularLocation>
</comment>
<comment type="similarity">
    <text evidence="2">Belongs to the AB hydrolase superfamily. Lipase family.</text>
</comment>
<accession>B8A8C9</accession>